<feature type="chain" id="PRO_1000083070" description="1,4-alpha-glucan branching enzyme GlgB">
    <location>
        <begin position="1"/>
        <end position="728"/>
    </location>
</feature>
<feature type="active site" description="Nucleophile" evidence="1">
    <location>
        <position position="405"/>
    </location>
</feature>
<feature type="active site" description="Proton donor" evidence="1">
    <location>
        <position position="458"/>
    </location>
</feature>
<protein>
    <recommendedName>
        <fullName evidence="1">1,4-alpha-glucan branching enzyme GlgB</fullName>
        <ecNumber evidence="1">2.4.1.18</ecNumber>
    </recommendedName>
    <alternativeName>
        <fullName evidence="1">1,4-alpha-D-glucan:1,4-alpha-D-glucan 6-glucosyl-transferase</fullName>
    </alternativeName>
    <alternativeName>
        <fullName evidence="1">Alpha-(1-&gt;4)-glucan branching enzyme</fullName>
    </alternativeName>
    <alternativeName>
        <fullName evidence="1">Glycogen branching enzyme</fullName>
        <shortName evidence="1">BE</shortName>
    </alternativeName>
</protein>
<comment type="function">
    <text evidence="1">Catalyzes the formation of the alpha-1,6-glucosidic linkages in glycogen by scission of a 1,4-alpha-linked oligosaccharide from growing alpha-1,4-glucan chains and the subsequent attachment of the oligosaccharide to the alpha-1,6 position.</text>
</comment>
<comment type="catalytic activity">
    <reaction evidence="1">
        <text>Transfers a segment of a (1-&gt;4)-alpha-D-glucan chain to a primary hydroxy group in a similar glucan chain.</text>
        <dbReference type="EC" id="2.4.1.18"/>
    </reaction>
</comment>
<comment type="pathway">
    <text evidence="1">Glycan biosynthesis; glycogen biosynthesis.</text>
</comment>
<comment type="subunit">
    <text evidence="1">Monomer.</text>
</comment>
<comment type="similarity">
    <text evidence="1">Belongs to the glycosyl hydrolase 13 family. GlgB subfamily.</text>
</comment>
<keyword id="KW-0119">Carbohydrate metabolism</keyword>
<keyword id="KW-0320">Glycogen biosynthesis</keyword>
<keyword id="KW-0321">Glycogen metabolism</keyword>
<keyword id="KW-0328">Glycosyltransferase</keyword>
<keyword id="KW-0808">Transferase</keyword>
<gene>
    <name evidence="1" type="primary">glgB</name>
    <name type="ordered locus">SPAB_04393</name>
</gene>
<organism>
    <name type="scientific">Salmonella paratyphi B (strain ATCC BAA-1250 / SPB7)</name>
    <dbReference type="NCBI Taxonomy" id="1016998"/>
    <lineage>
        <taxon>Bacteria</taxon>
        <taxon>Pseudomonadati</taxon>
        <taxon>Pseudomonadota</taxon>
        <taxon>Gammaproteobacteria</taxon>
        <taxon>Enterobacterales</taxon>
        <taxon>Enterobacteriaceae</taxon>
        <taxon>Salmonella</taxon>
    </lineage>
</organism>
<evidence type="ECO:0000255" key="1">
    <source>
        <dbReference type="HAMAP-Rule" id="MF_00685"/>
    </source>
</evidence>
<dbReference type="EC" id="2.4.1.18" evidence="1"/>
<dbReference type="EMBL" id="CP000886">
    <property type="protein sequence ID" value="ABX69709.1"/>
    <property type="molecule type" value="Genomic_DNA"/>
</dbReference>
<dbReference type="RefSeq" id="WP_000098546.1">
    <property type="nucleotide sequence ID" value="NC_010102.1"/>
</dbReference>
<dbReference type="SMR" id="A9MTV4"/>
<dbReference type="CAZy" id="CBM48">
    <property type="family name" value="Carbohydrate-Binding Module Family 48"/>
</dbReference>
<dbReference type="CAZy" id="GH13">
    <property type="family name" value="Glycoside Hydrolase Family 13"/>
</dbReference>
<dbReference type="KEGG" id="spq:SPAB_04393"/>
<dbReference type="PATRIC" id="fig|1016998.12.peg.4136"/>
<dbReference type="HOGENOM" id="CLU_004245_3_2_6"/>
<dbReference type="BioCyc" id="SENT1016998:SPAB_RS17885-MONOMER"/>
<dbReference type="UniPathway" id="UPA00164"/>
<dbReference type="Proteomes" id="UP000008556">
    <property type="component" value="Chromosome"/>
</dbReference>
<dbReference type="GO" id="GO:0005829">
    <property type="term" value="C:cytosol"/>
    <property type="evidence" value="ECO:0007669"/>
    <property type="project" value="TreeGrafter"/>
</dbReference>
<dbReference type="GO" id="GO:0003844">
    <property type="term" value="F:1,4-alpha-glucan branching enzyme activity"/>
    <property type="evidence" value="ECO:0007669"/>
    <property type="project" value="UniProtKB-UniRule"/>
</dbReference>
<dbReference type="GO" id="GO:0043169">
    <property type="term" value="F:cation binding"/>
    <property type="evidence" value="ECO:0007669"/>
    <property type="project" value="InterPro"/>
</dbReference>
<dbReference type="GO" id="GO:0004553">
    <property type="term" value="F:hydrolase activity, hydrolyzing O-glycosyl compounds"/>
    <property type="evidence" value="ECO:0007669"/>
    <property type="project" value="InterPro"/>
</dbReference>
<dbReference type="GO" id="GO:0005978">
    <property type="term" value="P:glycogen biosynthetic process"/>
    <property type="evidence" value="ECO:0007669"/>
    <property type="project" value="UniProtKB-UniRule"/>
</dbReference>
<dbReference type="CDD" id="cd11322">
    <property type="entry name" value="AmyAc_Glg_BE"/>
    <property type="match status" value="1"/>
</dbReference>
<dbReference type="CDD" id="cd02855">
    <property type="entry name" value="E_set_GBE_prok_N"/>
    <property type="match status" value="1"/>
</dbReference>
<dbReference type="FunFam" id="2.60.40.10:FF:000169">
    <property type="entry name" value="1,4-alpha-glucan branching enzyme GlgB"/>
    <property type="match status" value="1"/>
</dbReference>
<dbReference type="FunFam" id="2.60.40.10:FF:000331">
    <property type="entry name" value="1,4-alpha-glucan branching enzyme GlgB"/>
    <property type="match status" value="1"/>
</dbReference>
<dbReference type="FunFam" id="2.60.40.1180:FF:000002">
    <property type="entry name" value="1,4-alpha-glucan branching enzyme GlgB"/>
    <property type="match status" value="1"/>
</dbReference>
<dbReference type="FunFam" id="3.20.20.80:FF:000003">
    <property type="entry name" value="1,4-alpha-glucan branching enzyme GlgB"/>
    <property type="match status" value="1"/>
</dbReference>
<dbReference type="Gene3D" id="3.20.20.80">
    <property type="entry name" value="Glycosidases"/>
    <property type="match status" value="1"/>
</dbReference>
<dbReference type="Gene3D" id="2.60.40.1180">
    <property type="entry name" value="Golgi alpha-mannosidase II"/>
    <property type="match status" value="1"/>
</dbReference>
<dbReference type="Gene3D" id="2.60.40.10">
    <property type="entry name" value="Immunoglobulins"/>
    <property type="match status" value="2"/>
</dbReference>
<dbReference type="HAMAP" id="MF_00685">
    <property type="entry name" value="GlgB"/>
    <property type="match status" value="1"/>
</dbReference>
<dbReference type="InterPro" id="IPR006048">
    <property type="entry name" value="A-amylase/branching_C"/>
</dbReference>
<dbReference type="InterPro" id="IPR037439">
    <property type="entry name" value="Branching_enzy"/>
</dbReference>
<dbReference type="InterPro" id="IPR006407">
    <property type="entry name" value="GlgB"/>
</dbReference>
<dbReference type="InterPro" id="IPR054169">
    <property type="entry name" value="GlgB_N"/>
</dbReference>
<dbReference type="InterPro" id="IPR044143">
    <property type="entry name" value="GlgB_N_E_set_prok"/>
</dbReference>
<dbReference type="InterPro" id="IPR006047">
    <property type="entry name" value="Glyco_hydro_13_cat_dom"/>
</dbReference>
<dbReference type="InterPro" id="IPR004193">
    <property type="entry name" value="Glyco_hydro_13_N"/>
</dbReference>
<dbReference type="InterPro" id="IPR013780">
    <property type="entry name" value="Glyco_hydro_b"/>
</dbReference>
<dbReference type="InterPro" id="IPR017853">
    <property type="entry name" value="Glycoside_hydrolase_SF"/>
</dbReference>
<dbReference type="InterPro" id="IPR013783">
    <property type="entry name" value="Ig-like_fold"/>
</dbReference>
<dbReference type="InterPro" id="IPR014756">
    <property type="entry name" value="Ig_E-set"/>
</dbReference>
<dbReference type="NCBIfam" id="TIGR01515">
    <property type="entry name" value="branching_enzym"/>
    <property type="match status" value="1"/>
</dbReference>
<dbReference type="NCBIfam" id="NF003811">
    <property type="entry name" value="PRK05402.1"/>
    <property type="match status" value="1"/>
</dbReference>
<dbReference type="NCBIfam" id="NF008967">
    <property type="entry name" value="PRK12313.1"/>
    <property type="match status" value="1"/>
</dbReference>
<dbReference type="PANTHER" id="PTHR43651">
    <property type="entry name" value="1,4-ALPHA-GLUCAN-BRANCHING ENZYME"/>
    <property type="match status" value="1"/>
</dbReference>
<dbReference type="PANTHER" id="PTHR43651:SF3">
    <property type="entry name" value="1,4-ALPHA-GLUCAN-BRANCHING ENZYME"/>
    <property type="match status" value="1"/>
</dbReference>
<dbReference type="Pfam" id="PF00128">
    <property type="entry name" value="Alpha-amylase"/>
    <property type="match status" value="1"/>
</dbReference>
<dbReference type="Pfam" id="PF02806">
    <property type="entry name" value="Alpha-amylase_C"/>
    <property type="match status" value="1"/>
</dbReference>
<dbReference type="Pfam" id="PF02922">
    <property type="entry name" value="CBM_48"/>
    <property type="match status" value="1"/>
</dbReference>
<dbReference type="Pfam" id="PF22019">
    <property type="entry name" value="GlgB_N"/>
    <property type="match status" value="1"/>
</dbReference>
<dbReference type="PIRSF" id="PIRSF000463">
    <property type="entry name" value="GlgB"/>
    <property type="match status" value="1"/>
</dbReference>
<dbReference type="SMART" id="SM00642">
    <property type="entry name" value="Aamy"/>
    <property type="match status" value="1"/>
</dbReference>
<dbReference type="SUPFAM" id="SSF51445">
    <property type="entry name" value="(Trans)glycosidases"/>
    <property type="match status" value="1"/>
</dbReference>
<dbReference type="SUPFAM" id="SSF81296">
    <property type="entry name" value="E set domains"/>
    <property type="match status" value="2"/>
</dbReference>
<dbReference type="SUPFAM" id="SSF51011">
    <property type="entry name" value="Glycosyl hydrolase domain"/>
    <property type="match status" value="1"/>
</dbReference>
<name>GLGB_SALPB</name>
<sequence length="728" mass="84273">MSSRIDRDVINALIAGHFADPFSVLGMHQTQAGLEVRALLPDATDVWVIEPKTGRKVGKLECLDARGFFCGVLPRRKNFFRYQLAVTWHGQQNLIDDPYRFGPLIQEMDAWLLSEGTHLRPYETLGAHADTMDGVTGTRFSVWAPNARRVSVVGQFNYWDGRRHPMRLRKESGIWELFIPGAHNGQLYKFELLDANGNLRIKADPYAFEAQMRPETASMICGLPEKVTPSEERQKANQFDAPISIYEVHLGSWRRHTDNNFWLSYRELADQLVPYAKWMGFTHLELLPVNEHPFDGSWGYQPTGLYAPTRRFGTRDDFRYFINAAHAAGLNVILDWVPGHFPSDEFSLAEFDGTHLYEHSDPREGYHQDWNTLIYNYGRREVSNYLVGNALYWMERFGIDALRVDAVASMIYRDYSRKEGEWIPNEFGGRENLEAIEFLRNTNRIIGEQVPGAVSMAEESTDFAGVTRPPETGGLGFWFKWNLGWMHDTLDYMKLDPVYRQYHHDKLTFGMLYNHTENFVLPLSHDEVVHGKKSILDRMPGDAWQKFANLRAYYGWMWAFPGKKLLFMGNEFAQGREWNHDASLDWHLLEGGDNWHHGVQRLVRDLNHTYRHHKALHELDFDAYGFEWLVVDDNERSVLIFVRRDKAGNEIIVASNFTPVPRHDYRFGINQPGRWREILNTDSMHYHGSNTGNGGVVHSDEIESHGRQHSLNLTLPPLATIWLMREGE</sequence>
<proteinExistence type="inferred from homology"/>
<reference key="1">
    <citation type="submission" date="2007-11" db="EMBL/GenBank/DDBJ databases">
        <authorList>
            <consortium name="The Salmonella enterica serovar Paratyphi B Genome Sequencing Project"/>
            <person name="McClelland M."/>
            <person name="Sanderson E.K."/>
            <person name="Porwollik S."/>
            <person name="Spieth J."/>
            <person name="Clifton W.S."/>
            <person name="Fulton R."/>
            <person name="Cordes M."/>
            <person name="Wollam A."/>
            <person name="Shah N."/>
            <person name="Pepin K."/>
            <person name="Bhonagiri V."/>
            <person name="Nash W."/>
            <person name="Johnson M."/>
            <person name="Thiruvilangam P."/>
            <person name="Wilson R."/>
        </authorList>
    </citation>
    <scope>NUCLEOTIDE SEQUENCE [LARGE SCALE GENOMIC DNA]</scope>
    <source>
        <strain>ATCC BAA-1250 / SPB7</strain>
    </source>
</reference>
<accession>A9MTV4</accession>